<comment type="function">
    <text evidence="1">Condenses 4-methyl-5-(beta-hydroxyethyl)thiazole monophosphate (THZ-P) and 2-methyl-4-amino-5-hydroxymethyl pyrimidine pyrophosphate (HMP-PP) to form thiamine monophosphate (TMP).</text>
</comment>
<comment type="catalytic activity">
    <reaction evidence="1">
        <text>2-[(2R,5Z)-2-carboxy-4-methylthiazol-5(2H)-ylidene]ethyl phosphate + 4-amino-2-methyl-5-(diphosphooxymethyl)pyrimidine + 2 H(+) = thiamine phosphate + CO2 + diphosphate</text>
        <dbReference type="Rhea" id="RHEA:47844"/>
        <dbReference type="ChEBI" id="CHEBI:15378"/>
        <dbReference type="ChEBI" id="CHEBI:16526"/>
        <dbReference type="ChEBI" id="CHEBI:33019"/>
        <dbReference type="ChEBI" id="CHEBI:37575"/>
        <dbReference type="ChEBI" id="CHEBI:57841"/>
        <dbReference type="ChEBI" id="CHEBI:62899"/>
        <dbReference type="EC" id="2.5.1.3"/>
    </reaction>
</comment>
<comment type="catalytic activity">
    <reaction evidence="1">
        <text>2-(2-carboxy-4-methylthiazol-5-yl)ethyl phosphate + 4-amino-2-methyl-5-(diphosphooxymethyl)pyrimidine + 2 H(+) = thiamine phosphate + CO2 + diphosphate</text>
        <dbReference type="Rhea" id="RHEA:47848"/>
        <dbReference type="ChEBI" id="CHEBI:15378"/>
        <dbReference type="ChEBI" id="CHEBI:16526"/>
        <dbReference type="ChEBI" id="CHEBI:33019"/>
        <dbReference type="ChEBI" id="CHEBI:37575"/>
        <dbReference type="ChEBI" id="CHEBI:57841"/>
        <dbReference type="ChEBI" id="CHEBI:62890"/>
        <dbReference type="EC" id="2.5.1.3"/>
    </reaction>
</comment>
<comment type="catalytic activity">
    <reaction evidence="1">
        <text>4-methyl-5-(2-phosphooxyethyl)-thiazole + 4-amino-2-methyl-5-(diphosphooxymethyl)pyrimidine + H(+) = thiamine phosphate + diphosphate</text>
        <dbReference type="Rhea" id="RHEA:22328"/>
        <dbReference type="ChEBI" id="CHEBI:15378"/>
        <dbReference type="ChEBI" id="CHEBI:33019"/>
        <dbReference type="ChEBI" id="CHEBI:37575"/>
        <dbReference type="ChEBI" id="CHEBI:57841"/>
        <dbReference type="ChEBI" id="CHEBI:58296"/>
        <dbReference type="EC" id="2.5.1.3"/>
    </reaction>
</comment>
<comment type="cofactor">
    <cofactor evidence="1">
        <name>Mg(2+)</name>
        <dbReference type="ChEBI" id="CHEBI:18420"/>
    </cofactor>
    <text evidence="1">Binds 1 Mg(2+) ion per subunit.</text>
</comment>
<comment type="pathway">
    <text evidence="1">Cofactor biosynthesis; thiamine diphosphate biosynthesis; thiamine phosphate from 4-amino-2-methyl-5-diphosphomethylpyrimidine and 4-methyl-5-(2-phosphoethyl)-thiazole: step 1/1.</text>
</comment>
<comment type="similarity">
    <text evidence="1">Belongs to the thiamine-phosphate synthase family.</text>
</comment>
<accession>Q48DP2</accession>
<evidence type="ECO:0000255" key="1">
    <source>
        <dbReference type="HAMAP-Rule" id="MF_00097"/>
    </source>
</evidence>
<dbReference type="EC" id="2.5.1.3" evidence="1"/>
<dbReference type="EMBL" id="CP000058">
    <property type="protein sequence ID" value="AAZ35143.1"/>
    <property type="molecule type" value="Genomic_DNA"/>
</dbReference>
<dbReference type="RefSeq" id="WP_002555311.1">
    <property type="nucleotide sequence ID" value="NC_005773.3"/>
</dbReference>
<dbReference type="SMR" id="Q48DP2"/>
<dbReference type="KEGG" id="psp:PSPPH_4383"/>
<dbReference type="eggNOG" id="COG0352">
    <property type="taxonomic scope" value="Bacteria"/>
</dbReference>
<dbReference type="HOGENOM" id="CLU_018272_3_1_6"/>
<dbReference type="UniPathway" id="UPA00060">
    <property type="reaction ID" value="UER00141"/>
</dbReference>
<dbReference type="Proteomes" id="UP000000551">
    <property type="component" value="Chromosome"/>
</dbReference>
<dbReference type="GO" id="GO:0005737">
    <property type="term" value="C:cytoplasm"/>
    <property type="evidence" value="ECO:0007669"/>
    <property type="project" value="TreeGrafter"/>
</dbReference>
<dbReference type="GO" id="GO:0000287">
    <property type="term" value="F:magnesium ion binding"/>
    <property type="evidence" value="ECO:0007669"/>
    <property type="project" value="UniProtKB-UniRule"/>
</dbReference>
<dbReference type="GO" id="GO:0004789">
    <property type="term" value="F:thiamine-phosphate diphosphorylase activity"/>
    <property type="evidence" value="ECO:0007669"/>
    <property type="project" value="UniProtKB-UniRule"/>
</dbReference>
<dbReference type="GO" id="GO:0009228">
    <property type="term" value="P:thiamine biosynthetic process"/>
    <property type="evidence" value="ECO:0007669"/>
    <property type="project" value="UniProtKB-KW"/>
</dbReference>
<dbReference type="GO" id="GO:0009229">
    <property type="term" value="P:thiamine diphosphate biosynthetic process"/>
    <property type="evidence" value="ECO:0007669"/>
    <property type="project" value="UniProtKB-UniRule"/>
</dbReference>
<dbReference type="CDD" id="cd00564">
    <property type="entry name" value="TMP_TenI"/>
    <property type="match status" value="1"/>
</dbReference>
<dbReference type="Gene3D" id="3.20.20.70">
    <property type="entry name" value="Aldolase class I"/>
    <property type="match status" value="1"/>
</dbReference>
<dbReference type="HAMAP" id="MF_00097">
    <property type="entry name" value="TMP_synthase"/>
    <property type="match status" value="1"/>
</dbReference>
<dbReference type="InterPro" id="IPR013785">
    <property type="entry name" value="Aldolase_TIM"/>
</dbReference>
<dbReference type="InterPro" id="IPR036206">
    <property type="entry name" value="ThiamineP_synth_sf"/>
</dbReference>
<dbReference type="InterPro" id="IPR022998">
    <property type="entry name" value="ThiamineP_synth_TenI"/>
</dbReference>
<dbReference type="InterPro" id="IPR034291">
    <property type="entry name" value="TMP_synthase"/>
</dbReference>
<dbReference type="NCBIfam" id="TIGR00693">
    <property type="entry name" value="thiE"/>
    <property type="match status" value="1"/>
</dbReference>
<dbReference type="PANTHER" id="PTHR20857">
    <property type="entry name" value="THIAMINE-PHOSPHATE PYROPHOSPHORYLASE"/>
    <property type="match status" value="1"/>
</dbReference>
<dbReference type="PANTHER" id="PTHR20857:SF15">
    <property type="entry name" value="THIAMINE-PHOSPHATE SYNTHASE"/>
    <property type="match status" value="1"/>
</dbReference>
<dbReference type="Pfam" id="PF02581">
    <property type="entry name" value="TMP-TENI"/>
    <property type="match status" value="1"/>
</dbReference>
<dbReference type="SUPFAM" id="SSF51391">
    <property type="entry name" value="Thiamin phosphate synthase"/>
    <property type="match status" value="1"/>
</dbReference>
<gene>
    <name evidence="1" type="primary">thiE</name>
    <name type="ordered locus">PSPPH_4383</name>
</gene>
<reference key="1">
    <citation type="journal article" date="2005" name="J. Bacteriol.">
        <title>Whole-genome sequence analysis of Pseudomonas syringae pv. phaseolicola 1448A reveals divergence among pathovars in genes involved in virulence and transposition.</title>
        <authorList>
            <person name="Joardar V."/>
            <person name="Lindeberg M."/>
            <person name="Jackson R.W."/>
            <person name="Selengut J."/>
            <person name="Dodson R."/>
            <person name="Brinkac L.M."/>
            <person name="Daugherty S.C."/>
            <person name="DeBoy R.T."/>
            <person name="Durkin A.S."/>
            <person name="Gwinn Giglio M."/>
            <person name="Madupu R."/>
            <person name="Nelson W.C."/>
            <person name="Rosovitz M.J."/>
            <person name="Sullivan S.A."/>
            <person name="Crabtree J."/>
            <person name="Creasy T."/>
            <person name="Davidsen T.M."/>
            <person name="Haft D.H."/>
            <person name="Zafar N."/>
            <person name="Zhou L."/>
            <person name="Halpin R."/>
            <person name="Holley T."/>
            <person name="Khouri H.M."/>
            <person name="Feldblyum T.V."/>
            <person name="White O."/>
            <person name="Fraser C.M."/>
            <person name="Chatterjee A.K."/>
            <person name="Cartinhour S."/>
            <person name="Schneider D."/>
            <person name="Mansfield J.W."/>
            <person name="Collmer A."/>
            <person name="Buell R."/>
        </authorList>
    </citation>
    <scope>NUCLEOTIDE SEQUENCE [LARGE SCALE GENOMIC DNA]</scope>
    <source>
        <strain>1448A / Race 6</strain>
    </source>
</reference>
<name>THIE_PSE14</name>
<organism>
    <name type="scientific">Pseudomonas savastanoi pv. phaseolicola (strain 1448A / Race 6)</name>
    <name type="common">Pseudomonas syringae pv. phaseolicola (strain 1448A / Race 6)</name>
    <dbReference type="NCBI Taxonomy" id="264730"/>
    <lineage>
        <taxon>Bacteria</taxon>
        <taxon>Pseudomonadati</taxon>
        <taxon>Pseudomonadota</taxon>
        <taxon>Gammaproteobacteria</taxon>
        <taxon>Pseudomonadales</taxon>
        <taxon>Pseudomonadaceae</taxon>
        <taxon>Pseudomonas</taxon>
    </lineage>
</organism>
<proteinExistence type="inferred from homology"/>
<feature type="chain" id="PRO_1000008159" description="Thiamine-phosphate synthase">
    <location>
        <begin position="1"/>
        <end position="205"/>
    </location>
</feature>
<feature type="binding site" evidence="1">
    <location>
        <begin position="35"/>
        <end position="39"/>
    </location>
    <ligand>
        <name>4-amino-2-methyl-5-(diphosphooxymethyl)pyrimidine</name>
        <dbReference type="ChEBI" id="CHEBI:57841"/>
    </ligand>
</feature>
<feature type="binding site" evidence="1">
    <location>
        <position position="67"/>
    </location>
    <ligand>
        <name>4-amino-2-methyl-5-(diphosphooxymethyl)pyrimidine</name>
        <dbReference type="ChEBI" id="CHEBI:57841"/>
    </ligand>
</feature>
<feature type="binding site" evidence="1">
    <location>
        <position position="68"/>
    </location>
    <ligand>
        <name>Mg(2+)</name>
        <dbReference type="ChEBI" id="CHEBI:18420"/>
    </ligand>
</feature>
<feature type="binding site" evidence="1">
    <location>
        <position position="86"/>
    </location>
    <ligand>
        <name>Mg(2+)</name>
        <dbReference type="ChEBI" id="CHEBI:18420"/>
    </ligand>
</feature>
<feature type="binding site" evidence="1">
    <location>
        <position position="105"/>
    </location>
    <ligand>
        <name>4-amino-2-methyl-5-(diphosphooxymethyl)pyrimidine</name>
        <dbReference type="ChEBI" id="CHEBI:57841"/>
    </ligand>
</feature>
<feature type="binding site" evidence="1">
    <location>
        <begin position="132"/>
        <end position="134"/>
    </location>
    <ligand>
        <name>2-[(2R,5Z)-2-carboxy-4-methylthiazol-5(2H)-ylidene]ethyl phosphate</name>
        <dbReference type="ChEBI" id="CHEBI:62899"/>
    </ligand>
</feature>
<feature type="binding site" evidence="1">
    <location>
        <position position="135"/>
    </location>
    <ligand>
        <name>4-amino-2-methyl-5-(diphosphooxymethyl)pyrimidine</name>
        <dbReference type="ChEBI" id="CHEBI:57841"/>
    </ligand>
</feature>
<feature type="binding site" evidence="1">
    <location>
        <position position="162"/>
    </location>
    <ligand>
        <name>2-[(2R,5Z)-2-carboxy-4-methylthiazol-5(2H)-ylidene]ethyl phosphate</name>
        <dbReference type="ChEBI" id="CHEBI:62899"/>
    </ligand>
</feature>
<protein>
    <recommendedName>
        <fullName evidence="1">Thiamine-phosphate synthase</fullName>
        <shortName evidence="1">TP synthase</shortName>
        <shortName evidence="1">TPS</shortName>
        <ecNumber evidence="1">2.5.1.3</ecNumber>
    </recommendedName>
    <alternativeName>
        <fullName evidence="1">Thiamine-phosphate pyrophosphorylase</fullName>
        <shortName evidence="1">TMP pyrophosphorylase</shortName>
        <shortName evidence="1">TMP-PPase</shortName>
    </alternativeName>
</protein>
<sequence length="205" mass="21968">MKLRGLYAITDSQLLSGKFLSYVEAALDGGVTLLQYRDKTSDESRRLREATELLKLCERYKTRLIINDDAELAARLGVGVHLGQTDGSLPDARALLGHKAIVGATCHGSLELAEQAKADGATYVAFGRFFNSLTKPGAPAVPLDLIAQVRARVHLPIAVIGGITLENAPQLVEHGADLLAVVHGLFGAENAQEVTRRAKAFMALL</sequence>
<keyword id="KW-0460">Magnesium</keyword>
<keyword id="KW-0479">Metal-binding</keyword>
<keyword id="KW-0784">Thiamine biosynthesis</keyword>
<keyword id="KW-0808">Transferase</keyword>